<gene>
    <name type="ordered locus">MT1577</name>
</gene>
<dbReference type="EMBL" id="AE000516">
    <property type="protein sequence ID" value="AAK45844.1"/>
    <property type="molecule type" value="Genomic_DNA"/>
</dbReference>
<dbReference type="PIR" id="F70723">
    <property type="entry name" value="F70723"/>
</dbReference>
<dbReference type="RefSeq" id="WP_003407676.1">
    <property type="nucleotide sequence ID" value="NZ_KK341227.1"/>
</dbReference>
<dbReference type="SMR" id="P9WLV0"/>
<dbReference type="CAZy" id="GT1">
    <property type="family name" value="Glycosyltransferase Family 1"/>
</dbReference>
<dbReference type="KEGG" id="mtc:MT1577"/>
<dbReference type="PATRIC" id="fig|83331.31.peg.1699"/>
<dbReference type="HOGENOM" id="CLU_000537_8_0_11"/>
<dbReference type="Proteomes" id="UP000001020">
    <property type="component" value="Chromosome"/>
</dbReference>
<dbReference type="GO" id="GO:0016758">
    <property type="term" value="F:hexosyltransferase activity"/>
    <property type="evidence" value="ECO:0007669"/>
    <property type="project" value="InterPro"/>
</dbReference>
<dbReference type="GO" id="GO:0008194">
    <property type="term" value="F:UDP-glycosyltransferase activity"/>
    <property type="evidence" value="ECO:0007669"/>
    <property type="project" value="InterPro"/>
</dbReference>
<dbReference type="GO" id="GO:0005975">
    <property type="term" value="P:carbohydrate metabolic process"/>
    <property type="evidence" value="ECO:0007669"/>
    <property type="project" value="InterPro"/>
</dbReference>
<dbReference type="GO" id="GO:0030259">
    <property type="term" value="P:lipid glycosylation"/>
    <property type="evidence" value="ECO:0007669"/>
    <property type="project" value="InterPro"/>
</dbReference>
<dbReference type="GO" id="GO:0033072">
    <property type="term" value="P:vancomycin biosynthetic process"/>
    <property type="evidence" value="ECO:0007669"/>
    <property type="project" value="UniProtKB-ARBA"/>
</dbReference>
<dbReference type="CDD" id="cd03784">
    <property type="entry name" value="GT1_Gtf-like"/>
    <property type="match status" value="1"/>
</dbReference>
<dbReference type="FunFam" id="3.40.50.2000:FF:000170">
    <property type="entry name" value="Probable glycosyltransferase"/>
    <property type="match status" value="1"/>
</dbReference>
<dbReference type="FunFam" id="3.40.50.2000:FF:000009">
    <property type="entry name" value="Sterol 3-beta-glucosyltransferase UGT80A2"/>
    <property type="match status" value="1"/>
</dbReference>
<dbReference type="Gene3D" id="3.40.50.2000">
    <property type="entry name" value="Glycogen Phosphorylase B"/>
    <property type="match status" value="2"/>
</dbReference>
<dbReference type="InterPro" id="IPR010610">
    <property type="entry name" value="EryCIII-like_C"/>
</dbReference>
<dbReference type="InterPro" id="IPR050426">
    <property type="entry name" value="Glycosyltransferase_28"/>
</dbReference>
<dbReference type="InterPro" id="IPR004276">
    <property type="entry name" value="GlycoTrans_28_N"/>
</dbReference>
<dbReference type="InterPro" id="IPR002213">
    <property type="entry name" value="UDP_glucos_trans"/>
</dbReference>
<dbReference type="PANTHER" id="PTHR48050">
    <property type="entry name" value="STEROL 3-BETA-GLUCOSYLTRANSFERASE"/>
    <property type="match status" value="1"/>
</dbReference>
<dbReference type="PANTHER" id="PTHR48050:SF13">
    <property type="entry name" value="STEROL 3-BETA-GLUCOSYLTRANSFERASE UGT80A2"/>
    <property type="match status" value="1"/>
</dbReference>
<dbReference type="Pfam" id="PF06722">
    <property type="entry name" value="EryCIII-like_C"/>
    <property type="match status" value="1"/>
</dbReference>
<dbReference type="Pfam" id="PF03033">
    <property type="entry name" value="Glyco_transf_28"/>
    <property type="match status" value="1"/>
</dbReference>
<dbReference type="SUPFAM" id="SSF53756">
    <property type="entry name" value="UDP-Glycosyltransferase/glycogen phosphorylase"/>
    <property type="match status" value="1"/>
</dbReference>
<organism>
    <name type="scientific">Mycobacterium tuberculosis (strain CDC 1551 / Oshkosh)</name>
    <dbReference type="NCBI Taxonomy" id="83331"/>
    <lineage>
        <taxon>Bacteria</taxon>
        <taxon>Bacillati</taxon>
        <taxon>Actinomycetota</taxon>
        <taxon>Actinomycetes</taxon>
        <taxon>Mycobacteriales</taxon>
        <taxon>Mycobacteriaceae</taxon>
        <taxon>Mycobacterium</taxon>
        <taxon>Mycobacterium tuberculosis complex</taxon>
    </lineage>
</organism>
<accession>P9WLV0</accession>
<accession>L0T8I7</accession>
<accession>P64869</accession>
<accession>Q50581</accession>
<reference key="1">
    <citation type="journal article" date="2002" name="J. Bacteriol.">
        <title>Whole-genome comparison of Mycobacterium tuberculosis clinical and laboratory strains.</title>
        <authorList>
            <person name="Fleischmann R.D."/>
            <person name="Alland D."/>
            <person name="Eisen J.A."/>
            <person name="Carpenter L."/>
            <person name="White O."/>
            <person name="Peterson J.D."/>
            <person name="DeBoy R.T."/>
            <person name="Dodson R.J."/>
            <person name="Gwinn M.L."/>
            <person name="Haft D.H."/>
            <person name="Hickey E.K."/>
            <person name="Kolonay J.F."/>
            <person name="Nelson W.C."/>
            <person name="Umayam L.A."/>
            <person name="Ermolaeva M.D."/>
            <person name="Salzberg S.L."/>
            <person name="Delcher A."/>
            <person name="Utterback T.R."/>
            <person name="Weidman J.F."/>
            <person name="Khouri H.M."/>
            <person name="Gill J."/>
            <person name="Mikula A."/>
            <person name="Bishai W."/>
            <person name="Jacobs W.R. Jr."/>
            <person name="Venter J.C."/>
            <person name="Fraser C.M."/>
        </authorList>
    </citation>
    <scope>NUCLEOTIDE SEQUENCE [LARGE SCALE GENOMIC DNA]</scope>
    <source>
        <strain>CDC 1551 / Oshkosh</strain>
    </source>
</reference>
<comment type="similarity">
    <text evidence="1">To M.leprae L518_C2_147 and M.tuberculosis Rv1524.</text>
</comment>
<keyword id="KW-1185">Reference proteome</keyword>
<protein>
    <recommendedName>
        <fullName>Uncharacterized protein MT1577</fullName>
    </recommendedName>
</protein>
<evidence type="ECO:0000305" key="1"/>
<feature type="chain" id="PRO_0000427415" description="Uncharacterized protein MT1577">
    <location>
        <begin position="1"/>
        <end position="426"/>
    </location>
</feature>
<name>Y1526_MYCTO</name>
<sequence>MKFVLAVHGTRGDVEPCAAVGVELRRRGHAVHMAVPPNLIEFVESAGLTGVAYGPDSDEQINTVAAFVRNLTRAQNPLNLARAVKELFVEGWAEMGTTLTTLADGADLVMTGQTYHGVAANVAEYYDIPAAALHHFPMQVNGQIAIPSIPTPATLVRATMKVSWRLYAYVSKDADRAQRRELGLPPAPAPAVRRLAERGAPEIQAYDPVFFPGLAAEWSDRRPFVGPLTMELHSEPNEELESWIAAGTPPIYFGFGSTPVQTPVQTLAMISDVCAQLGERALIYSPAANSTRIRHADHVKRVGLVNYSTILPKCRAVVHHGGAGTTAAGLRAGMPTLILWDVADQPIWAGAVQRLKVGSAKRFTNITRGSLLKELRSILAPECAARAREISTRMTRPTAAVTAAADLLEATARQTPGSTPSSSPGR</sequence>
<proteinExistence type="predicted"/>